<comment type="catalytic activity">
    <reaction evidence="1">
        <text>(S)-4-amino-5-oxopentanoate = 5-aminolevulinate</text>
        <dbReference type="Rhea" id="RHEA:14265"/>
        <dbReference type="ChEBI" id="CHEBI:57501"/>
        <dbReference type="ChEBI" id="CHEBI:356416"/>
        <dbReference type="EC" id="5.4.3.8"/>
    </reaction>
</comment>
<comment type="cofactor">
    <cofactor evidence="1">
        <name>pyridoxal 5'-phosphate</name>
        <dbReference type="ChEBI" id="CHEBI:597326"/>
    </cofactor>
</comment>
<comment type="pathway">
    <text evidence="1">Porphyrin-containing compound metabolism; protoporphyrin-IX biosynthesis; 5-aminolevulinate from L-glutamyl-tRNA(Glu): step 2/2.</text>
</comment>
<comment type="subunit">
    <text evidence="1">Homodimer.</text>
</comment>
<comment type="subcellular location">
    <subcellularLocation>
        <location evidence="1">Cytoplasm</location>
    </subcellularLocation>
</comment>
<comment type="similarity">
    <text evidence="1">Belongs to the class-III pyridoxal-phosphate-dependent aminotransferase family. HemL subfamily.</text>
</comment>
<dbReference type="EC" id="5.4.3.8" evidence="1"/>
<dbReference type="EMBL" id="CP000323">
    <property type="protein sequence ID" value="ABE73955.1"/>
    <property type="molecule type" value="Genomic_DNA"/>
</dbReference>
<dbReference type="RefSeq" id="WP_011512545.1">
    <property type="nucleotide sequence ID" value="NC_007969.1"/>
</dbReference>
<dbReference type="SMR" id="Q1QEE8"/>
<dbReference type="STRING" id="335284.Pcryo_0171"/>
<dbReference type="KEGG" id="pcr:Pcryo_0171"/>
<dbReference type="eggNOG" id="COG0001">
    <property type="taxonomic scope" value="Bacteria"/>
</dbReference>
<dbReference type="HOGENOM" id="CLU_016922_1_5_6"/>
<dbReference type="UniPathway" id="UPA00251">
    <property type="reaction ID" value="UER00317"/>
</dbReference>
<dbReference type="Proteomes" id="UP000002425">
    <property type="component" value="Chromosome"/>
</dbReference>
<dbReference type="GO" id="GO:0005737">
    <property type="term" value="C:cytoplasm"/>
    <property type="evidence" value="ECO:0007669"/>
    <property type="project" value="UniProtKB-SubCell"/>
</dbReference>
<dbReference type="GO" id="GO:0042286">
    <property type="term" value="F:glutamate-1-semialdehyde 2,1-aminomutase activity"/>
    <property type="evidence" value="ECO:0007669"/>
    <property type="project" value="UniProtKB-UniRule"/>
</dbReference>
<dbReference type="GO" id="GO:0030170">
    <property type="term" value="F:pyridoxal phosphate binding"/>
    <property type="evidence" value="ECO:0007669"/>
    <property type="project" value="InterPro"/>
</dbReference>
<dbReference type="GO" id="GO:0008483">
    <property type="term" value="F:transaminase activity"/>
    <property type="evidence" value="ECO:0007669"/>
    <property type="project" value="InterPro"/>
</dbReference>
<dbReference type="GO" id="GO:0006782">
    <property type="term" value="P:protoporphyrinogen IX biosynthetic process"/>
    <property type="evidence" value="ECO:0007669"/>
    <property type="project" value="UniProtKB-UniRule"/>
</dbReference>
<dbReference type="CDD" id="cd00610">
    <property type="entry name" value="OAT_like"/>
    <property type="match status" value="1"/>
</dbReference>
<dbReference type="FunFam" id="3.40.640.10:FF:000021">
    <property type="entry name" value="Glutamate-1-semialdehyde 2,1-aminomutase"/>
    <property type="match status" value="1"/>
</dbReference>
<dbReference type="Gene3D" id="3.90.1150.10">
    <property type="entry name" value="Aspartate Aminotransferase, domain 1"/>
    <property type="match status" value="1"/>
</dbReference>
<dbReference type="Gene3D" id="3.40.640.10">
    <property type="entry name" value="Type I PLP-dependent aspartate aminotransferase-like (Major domain)"/>
    <property type="match status" value="1"/>
</dbReference>
<dbReference type="HAMAP" id="MF_00375">
    <property type="entry name" value="HemL_aminotrans_3"/>
    <property type="match status" value="1"/>
</dbReference>
<dbReference type="InterPro" id="IPR004639">
    <property type="entry name" value="4pyrrol_synth_GluAld_NH2Trfase"/>
</dbReference>
<dbReference type="InterPro" id="IPR005814">
    <property type="entry name" value="Aminotrans_3"/>
</dbReference>
<dbReference type="InterPro" id="IPR049704">
    <property type="entry name" value="Aminotrans_3_PPA_site"/>
</dbReference>
<dbReference type="InterPro" id="IPR015424">
    <property type="entry name" value="PyrdxlP-dep_Trfase"/>
</dbReference>
<dbReference type="InterPro" id="IPR015421">
    <property type="entry name" value="PyrdxlP-dep_Trfase_major"/>
</dbReference>
<dbReference type="InterPro" id="IPR015422">
    <property type="entry name" value="PyrdxlP-dep_Trfase_small"/>
</dbReference>
<dbReference type="NCBIfam" id="TIGR00713">
    <property type="entry name" value="hemL"/>
    <property type="match status" value="1"/>
</dbReference>
<dbReference type="NCBIfam" id="NF000818">
    <property type="entry name" value="PRK00062.1"/>
    <property type="match status" value="1"/>
</dbReference>
<dbReference type="PANTHER" id="PTHR43713">
    <property type="entry name" value="GLUTAMATE-1-SEMIALDEHYDE 2,1-AMINOMUTASE"/>
    <property type="match status" value="1"/>
</dbReference>
<dbReference type="PANTHER" id="PTHR43713:SF3">
    <property type="entry name" value="GLUTAMATE-1-SEMIALDEHYDE 2,1-AMINOMUTASE 1, CHLOROPLASTIC-RELATED"/>
    <property type="match status" value="1"/>
</dbReference>
<dbReference type="Pfam" id="PF00202">
    <property type="entry name" value="Aminotran_3"/>
    <property type="match status" value="1"/>
</dbReference>
<dbReference type="SUPFAM" id="SSF53383">
    <property type="entry name" value="PLP-dependent transferases"/>
    <property type="match status" value="1"/>
</dbReference>
<dbReference type="PROSITE" id="PS00600">
    <property type="entry name" value="AA_TRANSFER_CLASS_3"/>
    <property type="match status" value="1"/>
</dbReference>
<protein>
    <recommendedName>
        <fullName evidence="1">Glutamate-1-semialdehyde 2,1-aminomutase</fullName>
        <shortName evidence="1">GSA</shortName>
        <ecNumber evidence="1">5.4.3.8</ecNumber>
    </recommendedName>
    <alternativeName>
        <fullName evidence="1">Glutamate-1-semialdehyde aminotransferase</fullName>
        <shortName evidence="1">GSA-AT</shortName>
    </alternativeName>
</protein>
<reference key="1">
    <citation type="submission" date="2006-03" db="EMBL/GenBank/DDBJ databases">
        <title>Complete sequence of chromosome of Psychrobacter cryohalolentis K5.</title>
        <authorList>
            <consortium name="US DOE Joint Genome Institute"/>
            <person name="Copeland A."/>
            <person name="Lucas S."/>
            <person name="Lapidus A."/>
            <person name="Barry K."/>
            <person name="Detter J.C."/>
            <person name="Glavina T."/>
            <person name="Hammon N."/>
            <person name="Israni S."/>
            <person name="Dalin E."/>
            <person name="Tice H."/>
            <person name="Pitluck S."/>
            <person name="Brettin T."/>
            <person name="Bruce D."/>
            <person name="Han C."/>
            <person name="Tapia R."/>
            <person name="Sims D.R."/>
            <person name="Gilna P."/>
            <person name="Schmutz J."/>
            <person name="Larimer F."/>
            <person name="Land M."/>
            <person name="Hauser L."/>
            <person name="Kyrpides N."/>
            <person name="Kim E."/>
            <person name="Richardson P."/>
        </authorList>
    </citation>
    <scope>NUCLEOTIDE SEQUENCE [LARGE SCALE GENOMIC DNA]</scope>
    <source>
        <strain>ATCC BAA-1226 / DSM 17306 / VKM B-2378 / K5</strain>
    </source>
</reference>
<feature type="chain" id="PRO_0000243608" description="Glutamate-1-semialdehyde 2,1-aminomutase">
    <location>
        <begin position="1"/>
        <end position="433"/>
    </location>
</feature>
<feature type="modified residue" description="N6-(pyridoxal phosphate)lysine" evidence="1">
    <location>
        <position position="266"/>
    </location>
</feature>
<gene>
    <name evidence="1" type="primary">hemL</name>
    <name type="ordered locus">Pcryo_0171</name>
</gene>
<sequence length="433" mass="46487">MSTKNEQLFAQARKHIPGGVNSPVRAFAGVGGTPIFMHRANGSKIYDTEDNAYIDYVGSWGPMILGHAHPKVIDAVKKAADDGLSFGTPTPFETTVADKICEIVPSVEMIRMTSSGTEATMSAIRLARGYTQRDKIVKFEGCYHGHSDSLLVKAGSGMLDIGEPTSKGVPADFAKHTITIPYNDPQAIKDCFEKWGEEIACVILEPIAGNMNMVIPSQEFHDTLRAECTANGAVLIFDEVMTGFRVGLGGAQAHFGIDPDLTCFGKIIGAGLPVGAFGGKKDIMSCIAPLGGVYQAGTLSGNPLAMRAGIAMFEDLTAEGFYDELSAKVDHLVDGFQAAADKHGINMRTNKLGGMFGMFFVKDSATTVPQNFDDVTECDMELFNTFFHGMLDRGIYLAPSAYEAGFMSIKHSNEDIEATIKAADEIFAEMAKA</sequence>
<keyword id="KW-0963">Cytoplasm</keyword>
<keyword id="KW-0413">Isomerase</keyword>
<keyword id="KW-0627">Porphyrin biosynthesis</keyword>
<keyword id="KW-0663">Pyridoxal phosphate</keyword>
<accession>Q1QEE8</accession>
<proteinExistence type="inferred from homology"/>
<name>GSA_PSYCK</name>
<organism>
    <name type="scientific">Psychrobacter cryohalolentis (strain ATCC BAA-1226 / DSM 17306 / VKM B-2378 / K5)</name>
    <dbReference type="NCBI Taxonomy" id="335284"/>
    <lineage>
        <taxon>Bacteria</taxon>
        <taxon>Pseudomonadati</taxon>
        <taxon>Pseudomonadota</taxon>
        <taxon>Gammaproteobacteria</taxon>
        <taxon>Moraxellales</taxon>
        <taxon>Moraxellaceae</taxon>
        <taxon>Psychrobacter</taxon>
    </lineage>
</organism>
<evidence type="ECO:0000255" key="1">
    <source>
        <dbReference type="HAMAP-Rule" id="MF_00375"/>
    </source>
</evidence>